<accession>A6QBB6</accession>
<evidence type="ECO:0000255" key="1">
    <source>
        <dbReference type="HAMAP-Rule" id="MF_01622"/>
    </source>
</evidence>
<gene>
    <name evidence="1" type="primary">selU</name>
    <name type="ordered locus">SUN_1828</name>
</gene>
<protein>
    <recommendedName>
        <fullName evidence="1">tRNA 2-selenouridine synthase</fullName>
        <ecNumber evidence="1">2.9.1.3</ecNumber>
    </recommendedName>
</protein>
<comment type="function">
    <text evidence="1">Involved in the post-transcriptional modification of the uridine at the wobble position (U34) of tRNA(Lys), tRNA(Glu) and tRNA(Gln). Catalyzes the conversion of 2-thiouridine (S2U-RNA) to 2-selenouridine (Se2U-RNA). Acts in a two-step process involving geranylation of 2-thiouridine (S2U) to S-geranyl-2-thiouridine (geS2U) and subsequent selenation of the latter derivative to 2-selenouridine (Se2U) in the tRNA chain.</text>
</comment>
<comment type="catalytic activity">
    <reaction evidence="1">
        <text>5-methylaminomethyl-2-thiouridine(34) in tRNA + selenophosphate + (2E)-geranyl diphosphate + H2O + H(+) = 5-methylaminomethyl-2-selenouridine(34) in tRNA + (2E)-thiogeraniol + phosphate + diphosphate</text>
        <dbReference type="Rhea" id="RHEA:42716"/>
        <dbReference type="Rhea" id="RHEA-COMP:10195"/>
        <dbReference type="Rhea" id="RHEA-COMP:10196"/>
        <dbReference type="ChEBI" id="CHEBI:15377"/>
        <dbReference type="ChEBI" id="CHEBI:15378"/>
        <dbReference type="ChEBI" id="CHEBI:16144"/>
        <dbReference type="ChEBI" id="CHEBI:33019"/>
        <dbReference type="ChEBI" id="CHEBI:43474"/>
        <dbReference type="ChEBI" id="CHEBI:58057"/>
        <dbReference type="ChEBI" id="CHEBI:74455"/>
        <dbReference type="ChEBI" id="CHEBI:82743"/>
        <dbReference type="ChEBI" id="CHEBI:143703"/>
        <dbReference type="EC" id="2.9.1.3"/>
    </reaction>
    <physiologicalReaction direction="left-to-right" evidence="1">
        <dbReference type="Rhea" id="RHEA:42717"/>
    </physiologicalReaction>
</comment>
<comment type="catalytic activity">
    <reaction evidence="1">
        <text>5-methylaminomethyl-2-thiouridine(34) in tRNA + (2E)-geranyl diphosphate = 5-methylaminomethyl-S-(2E)-geranyl-thiouridine(34) in tRNA + diphosphate</text>
        <dbReference type="Rhea" id="RHEA:14085"/>
        <dbReference type="Rhea" id="RHEA-COMP:10195"/>
        <dbReference type="Rhea" id="RHEA-COMP:14654"/>
        <dbReference type="ChEBI" id="CHEBI:33019"/>
        <dbReference type="ChEBI" id="CHEBI:58057"/>
        <dbReference type="ChEBI" id="CHEBI:74455"/>
        <dbReference type="ChEBI" id="CHEBI:140632"/>
    </reaction>
    <physiologicalReaction direction="left-to-right" evidence="1">
        <dbReference type="Rhea" id="RHEA:14086"/>
    </physiologicalReaction>
</comment>
<comment type="catalytic activity">
    <reaction evidence="1">
        <text>5-methylaminomethyl-S-(2E)-geranyl-thiouridine(34) in tRNA + selenophosphate + H(+) = 5-methylaminomethyl-2-(Se-phospho)selenouridine(34) in tRNA + (2E)-thiogeraniol</text>
        <dbReference type="Rhea" id="RHEA:60172"/>
        <dbReference type="Rhea" id="RHEA-COMP:14654"/>
        <dbReference type="Rhea" id="RHEA-COMP:15523"/>
        <dbReference type="ChEBI" id="CHEBI:15378"/>
        <dbReference type="ChEBI" id="CHEBI:16144"/>
        <dbReference type="ChEBI" id="CHEBI:140632"/>
        <dbReference type="ChEBI" id="CHEBI:143702"/>
        <dbReference type="ChEBI" id="CHEBI:143703"/>
    </reaction>
    <physiologicalReaction direction="left-to-right" evidence="1">
        <dbReference type="Rhea" id="RHEA:60173"/>
    </physiologicalReaction>
</comment>
<comment type="catalytic activity">
    <reaction evidence="1">
        <text>5-methylaminomethyl-2-(Se-phospho)selenouridine(34) in tRNA + H2O = 5-methylaminomethyl-2-selenouridine(34) in tRNA + phosphate</text>
        <dbReference type="Rhea" id="RHEA:60176"/>
        <dbReference type="Rhea" id="RHEA-COMP:10196"/>
        <dbReference type="Rhea" id="RHEA-COMP:15523"/>
        <dbReference type="ChEBI" id="CHEBI:15377"/>
        <dbReference type="ChEBI" id="CHEBI:43474"/>
        <dbReference type="ChEBI" id="CHEBI:82743"/>
        <dbReference type="ChEBI" id="CHEBI:143702"/>
    </reaction>
    <physiologicalReaction direction="left-to-right" evidence="1">
        <dbReference type="Rhea" id="RHEA:60177"/>
    </physiologicalReaction>
</comment>
<comment type="subunit">
    <text evidence="1">Monomer.</text>
</comment>
<comment type="similarity">
    <text evidence="1">Belongs to the SelU family.</text>
</comment>
<keyword id="KW-0711">Selenium</keyword>
<keyword id="KW-0808">Transferase</keyword>
<reference key="1">
    <citation type="journal article" date="2007" name="Proc. Natl. Acad. Sci. U.S.A.">
        <title>Deep-sea vent epsilon-proteobacterial genomes provide insights into emergence of pathogens.</title>
        <authorList>
            <person name="Nakagawa S."/>
            <person name="Takaki Y."/>
            <person name="Shimamura S."/>
            <person name="Reysenbach A.-L."/>
            <person name="Takai K."/>
            <person name="Horikoshi K."/>
        </authorList>
    </citation>
    <scope>NUCLEOTIDE SEQUENCE [LARGE SCALE GENOMIC DNA]</scope>
    <source>
        <strain>NBC37-1</strain>
    </source>
</reference>
<organism>
    <name type="scientific">Sulfurovum sp. (strain NBC37-1)</name>
    <dbReference type="NCBI Taxonomy" id="387093"/>
    <lineage>
        <taxon>Bacteria</taxon>
        <taxon>Pseudomonadati</taxon>
        <taxon>Campylobacterota</taxon>
        <taxon>Epsilonproteobacteria</taxon>
        <taxon>Campylobacterales</taxon>
        <taxon>Sulfurovaceae</taxon>
        <taxon>Sulfurovum</taxon>
    </lineage>
</organism>
<proteinExistence type="inferred from homology"/>
<name>SELU_SULNB</name>
<dbReference type="EC" id="2.9.1.3" evidence="1"/>
<dbReference type="EMBL" id="AP009179">
    <property type="protein sequence ID" value="BAF72775.1"/>
    <property type="molecule type" value="Genomic_DNA"/>
</dbReference>
<dbReference type="RefSeq" id="WP_012083588.1">
    <property type="nucleotide sequence ID" value="NC_009663.1"/>
</dbReference>
<dbReference type="SMR" id="A6QBB6"/>
<dbReference type="STRING" id="387093.SUN_1828"/>
<dbReference type="KEGG" id="sun:SUN_1828"/>
<dbReference type="eggNOG" id="COG2603">
    <property type="taxonomic scope" value="Bacteria"/>
</dbReference>
<dbReference type="HOGENOM" id="CLU_043456_1_0_7"/>
<dbReference type="OrthoDB" id="285281at2"/>
<dbReference type="Proteomes" id="UP000006378">
    <property type="component" value="Chromosome"/>
</dbReference>
<dbReference type="GO" id="GO:0043828">
    <property type="term" value="F:tRNA 2-selenouridine synthase activity"/>
    <property type="evidence" value="ECO:0007669"/>
    <property type="project" value="UniProtKB-EC"/>
</dbReference>
<dbReference type="GO" id="GO:0002098">
    <property type="term" value="P:tRNA wobble uridine modification"/>
    <property type="evidence" value="ECO:0007669"/>
    <property type="project" value="InterPro"/>
</dbReference>
<dbReference type="CDD" id="cd01520">
    <property type="entry name" value="RHOD_YbbB"/>
    <property type="match status" value="1"/>
</dbReference>
<dbReference type="Gene3D" id="3.40.250.10">
    <property type="entry name" value="Rhodanese-like domain"/>
    <property type="match status" value="1"/>
</dbReference>
<dbReference type="HAMAP" id="MF_01622">
    <property type="entry name" value="tRNA_sel_U_synth"/>
    <property type="match status" value="1"/>
</dbReference>
<dbReference type="InterPro" id="IPR027417">
    <property type="entry name" value="P-loop_NTPase"/>
</dbReference>
<dbReference type="InterPro" id="IPR001763">
    <property type="entry name" value="Rhodanese-like_dom"/>
</dbReference>
<dbReference type="InterPro" id="IPR036873">
    <property type="entry name" value="Rhodanese-like_dom_sf"/>
</dbReference>
<dbReference type="InterPro" id="IPR017582">
    <property type="entry name" value="SelU"/>
</dbReference>
<dbReference type="NCBIfam" id="NF008750">
    <property type="entry name" value="PRK11784.1-2"/>
    <property type="match status" value="1"/>
</dbReference>
<dbReference type="NCBIfam" id="NF008751">
    <property type="entry name" value="PRK11784.1-3"/>
    <property type="match status" value="1"/>
</dbReference>
<dbReference type="NCBIfam" id="TIGR03167">
    <property type="entry name" value="tRNA_sel_U_synt"/>
    <property type="match status" value="1"/>
</dbReference>
<dbReference type="PANTHER" id="PTHR30401">
    <property type="entry name" value="TRNA 2-SELENOURIDINE SYNTHASE"/>
    <property type="match status" value="1"/>
</dbReference>
<dbReference type="PANTHER" id="PTHR30401:SF0">
    <property type="entry name" value="TRNA 2-SELENOURIDINE SYNTHASE"/>
    <property type="match status" value="1"/>
</dbReference>
<dbReference type="Pfam" id="PF00581">
    <property type="entry name" value="Rhodanese"/>
    <property type="match status" value="1"/>
</dbReference>
<dbReference type="SMART" id="SM00450">
    <property type="entry name" value="RHOD"/>
    <property type="match status" value="1"/>
</dbReference>
<dbReference type="SUPFAM" id="SSF52540">
    <property type="entry name" value="P-loop containing nucleoside triphosphate hydrolases"/>
    <property type="match status" value="1"/>
</dbReference>
<dbReference type="SUPFAM" id="SSF52821">
    <property type="entry name" value="Rhodanese/Cell cycle control phosphatase"/>
    <property type="match status" value="1"/>
</dbReference>
<dbReference type="PROSITE" id="PS50206">
    <property type="entry name" value="RHODANESE_3"/>
    <property type="match status" value="1"/>
</dbReference>
<sequence length="364" mass="41921">MEELPQSSDFRSIVLNNTPLIDVRAPVEFAKGAFPHAVNLPLMNDEERHVVGIKYKEEGNAEAVKLGHALVSGDVKEARIKAWTDFIASHPDAMLYCFRGGQRSQIAQEWLAENGREIVRLKGGYKAFRNWLMQETEKAVEQFKPIVLGGRTGSGKTILLKKLQNAIDLEGLANHRGSSFGRDITPQPTLIDFENALAYDLIQKLDQGFEHLVFEDEGKCVGRIYLPKILVEHLSEAPLVVLETPTEKRIEITFDEYVAKAHEKYKEVYHADYLKVWTEDMHEAMKRIQKRLGGQRYKIVCEIFEDALKEQKKNSSLEGYKVWIAYLLSEYYDPMYDYQIERNASRILFRGNAQEIEAFLKEYR</sequence>
<feature type="chain" id="PRO_0000335595" description="tRNA 2-selenouridine synthase">
    <location>
        <begin position="1"/>
        <end position="364"/>
    </location>
</feature>
<feature type="domain" description="Rhodanese" evidence="1">
    <location>
        <begin position="14"/>
        <end position="136"/>
    </location>
</feature>
<feature type="active site" description="S-selanylcysteine intermediate" evidence="1">
    <location>
        <position position="97"/>
    </location>
</feature>